<geneLocation type="chloroplast"/>
<protein>
    <recommendedName>
        <fullName evidence="1">Protein PsbN</fullName>
    </recommendedName>
</protein>
<feature type="chain" id="PRO_0000207860" description="Protein PsbN">
    <location>
        <begin position="1"/>
        <end position="45"/>
    </location>
</feature>
<feature type="transmembrane region" description="Helical" evidence="1">
    <location>
        <begin position="12"/>
        <end position="30"/>
    </location>
</feature>
<name>PSBN_ADICA</name>
<evidence type="ECO:0000255" key="1">
    <source>
        <dbReference type="HAMAP-Rule" id="MF_00293"/>
    </source>
</evidence>
<gene>
    <name evidence="1" type="primary">psbN</name>
</gene>
<keyword id="KW-0150">Chloroplast</keyword>
<keyword id="KW-0472">Membrane</keyword>
<keyword id="KW-0934">Plastid</keyword>
<keyword id="KW-0793">Thylakoid</keyword>
<keyword id="KW-0812">Transmembrane</keyword>
<keyword id="KW-1133">Transmembrane helix</keyword>
<sequence length="45" mass="5059">MATETATLVTTFLSRSLVSFTGYALYTAFGKPSKELRDPFEEHED</sequence>
<organism>
    <name type="scientific">Adiantum capillus-veneris</name>
    <name type="common">Maidenhair fern</name>
    <dbReference type="NCBI Taxonomy" id="13818"/>
    <lineage>
        <taxon>Eukaryota</taxon>
        <taxon>Viridiplantae</taxon>
        <taxon>Streptophyta</taxon>
        <taxon>Embryophyta</taxon>
        <taxon>Tracheophyta</taxon>
        <taxon>Polypodiopsida</taxon>
        <taxon>Polypodiidae</taxon>
        <taxon>Polypodiales</taxon>
        <taxon>Pteridineae</taxon>
        <taxon>Pteridaceae</taxon>
        <taxon>Vittarioideae</taxon>
        <taxon>Adiantum</taxon>
    </lineage>
</organism>
<comment type="function">
    <text evidence="1">May play a role in photosystem I and II biogenesis.</text>
</comment>
<comment type="subcellular location">
    <subcellularLocation>
        <location evidence="1">Plastid</location>
        <location evidence="1">Chloroplast thylakoid membrane</location>
        <topology evidence="1">Single-pass membrane protein</topology>
    </subcellularLocation>
</comment>
<comment type="similarity">
    <text evidence="1">Belongs to the PsbN family.</text>
</comment>
<comment type="caution">
    <text evidence="1">Originally thought to be a component of PSII; based on experiments in Synechocystis, N.tabacum and barley, and its absence from PSII in T.elongatus and T.vulcanus, this is probably not true.</text>
</comment>
<proteinExistence type="evidence at transcript level"/>
<accession>Q85FJ5</accession>
<dbReference type="EMBL" id="AY178864">
    <property type="protein sequence ID" value="AAP29418.2"/>
    <property type="molecule type" value="Genomic_DNA"/>
</dbReference>
<dbReference type="RefSeq" id="NP_848087.2">
    <property type="nucleotide sequence ID" value="NC_004766.1"/>
</dbReference>
<dbReference type="SMR" id="Q85FJ5"/>
<dbReference type="GeneID" id="807405"/>
<dbReference type="GO" id="GO:0009535">
    <property type="term" value="C:chloroplast thylakoid membrane"/>
    <property type="evidence" value="ECO:0007669"/>
    <property type="project" value="UniProtKB-SubCell"/>
</dbReference>
<dbReference type="GO" id="GO:0015979">
    <property type="term" value="P:photosynthesis"/>
    <property type="evidence" value="ECO:0007669"/>
    <property type="project" value="InterPro"/>
</dbReference>
<dbReference type="HAMAP" id="MF_00293">
    <property type="entry name" value="PSII_PsbN"/>
    <property type="match status" value="1"/>
</dbReference>
<dbReference type="InterPro" id="IPR003398">
    <property type="entry name" value="PSII_PsbN"/>
</dbReference>
<dbReference type="PANTHER" id="PTHR35326">
    <property type="entry name" value="PROTEIN PSBN"/>
    <property type="match status" value="1"/>
</dbReference>
<dbReference type="PANTHER" id="PTHR35326:SF3">
    <property type="entry name" value="PROTEIN PSBN"/>
    <property type="match status" value="1"/>
</dbReference>
<dbReference type="Pfam" id="PF02468">
    <property type="entry name" value="PsbN"/>
    <property type="match status" value="1"/>
</dbReference>
<reference key="1">
    <citation type="journal article" date="2003" name="DNA Res.">
        <title>Complete nucleotide sequence of the chloroplast genome from a leptosporangiate fern, Adiantum capillus-veneris L.</title>
        <authorList>
            <person name="Wolf P.G."/>
            <person name="Rowe C.A."/>
            <person name="Sinclair R.B."/>
            <person name="Hasebe M."/>
        </authorList>
    </citation>
    <scope>NUCLEOTIDE SEQUENCE [LARGE SCALE GENOMIC DNA]</scope>
</reference>
<reference key="2">
    <citation type="journal article" date="2004" name="Gene">
        <title>High levels of RNA editing in a vascular plant chloroplast genome: analysis of transcripts from the fern Adiantum capillus-veneris.</title>
        <authorList>
            <person name="Wolf P.G."/>
            <person name="Rowe C.A."/>
            <person name="Hasebe M."/>
        </authorList>
    </citation>
    <scope>ABSENCE OF RNA EDITING</scope>
    <source>
        <tissue>Frond</tissue>
    </source>
</reference>